<protein>
    <recommendedName>
        <fullName evidence="1">DNA-directed RNA polymerase subunit epsilon</fullName>
        <shortName evidence="1">RNAP epsilon subunit</shortName>
        <ecNumber evidence="1">2.7.7.6</ecNumber>
    </recommendedName>
    <alternativeName>
        <fullName evidence="1">RNA polymerase epsilon subunit</fullName>
    </alternativeName>
    <alternativeName>
        <fullName evidence="1">Transcriptase subunit epsilon</fullName>
    </alternativeName>
</protein>
<comment type="function">
    <text evidence="1">A non-essential component of RNA polymerase (RNAP).</text>
</comment>
<comment type="catalytic activity">
    <reaction evidence="1">
        <text>RNA(n) + a ribonucleoside 5'-triphosphate = RNA(n+1) + diphosphate</text>
        <dbReference type="Rhea" id="RHEA:21248"/>
        <dbReference type="Rhea" id="RHEA-COMP:14527"/>
        <dbReference type="Rhea" id="RHEA-COMP:17342"/>
        <dbReference type="ChEBI" id="CHEBI:33019"/>
        <dbReference type="ChEBI" id="CHEBI:61557"/>
        <dbReference type="ChEBI" id="CHEBI:140395"/>
        <dbReference type="EC" id="2.7.7.6"/>
    </reaction>
</comment>
<comment type="subunit">
    <text evidence="1">RNAP is composed of a core of 2 alpha, a beta and a beta' subunit. The core is associated with a delta subunit, and at least one of epsilon or omega. When a sigma factor is associated with the core the holoenzyme is formed, which can initiate transcription.</text>
</comment>
<comment type="similarity">
    <text evidence="1">Belongs to the RNA polymerase subunit epsilon family.</text>
</comment>
<proteinExistence type="inferred from homology"/>
<organism>
    <name type="scientific">Streptococcus gordonii (strain Challis / ATCC 35105 / BCRC 15272 / CH1 / DL1 / V288)</name>
    <dbReference type="NCBI Taxonomy" id="467705"/>
    <lineage>
        <taxon>Bacteria</taxon>
        <taxon>Bacillati</taxon>
        <taxon>Bacillota</taxon>
        <taxon>Bacilli</taxon>
        <taxon>Lactobacillales</taxon>
        <taxon>Streptococcaceae</taxon>
        <taxon>Streptococcus</taxon>
    </lineage>
</organism>
<dbReference type="EC" id="2.7.7.6" evidence="1"/>
<dbReference type="EMBL" id="CP000725">
    <property type="protein sequence ID" value="ABV09565.1"/>
    <property type="molecule type" value="Genomic_DNA"/>
</dbReference>
<dbReference type="RefSeq" id="WP_008808238.1">
    <property type="nucleotide sequence ID" value="NC_009785.1"/>
</dbReference>
<dbReference type="SMR" id="A8AUS9"/>
<dbReference type="STRING" id="467705.SGO_0220"/>
<dbReference type="KEGG" id="sgo:SGO_0220"/>
<dbReference type="eggNOG" id="COG5503">
    <property type="taxonomic scope" value="Bacteria"/>
</dbReference>
<dbReference type="HOGENOM" id="CLU_187518_0_0_9"/>
<dbReference type="Proteomes" id="UP000001131">
    <property type="component" value="Chromosome"/>
</dbReference>
<dbReference type="GO" id="GO:0000428">
    <property type="term" value="C:DNA-directed RNA polymerase complex"/>
    <property type="evidence" value="ECO:0007669"/>
    <property type="project" value="UniProtKB-KW"/>
</dbReference>
<dbReference type="GO" id="GO:0003677">
    <property type="term" value="F:DNA binding"/>
    <property type="evidence" value="ECO:0007669"/>
    <property type="project" value="UniProtKB-UniRule"/>
</dbReference>
<dbReference type="GO" id="GO:0003899">
    <property type="term" value="F:DNA-directed RNA polymerase activity"/>
    <property type="evidence" value="ECO:0007669"/>
    <property type="project" value="UniProtKB-UniRule"/>
</dbReference>
<dbReference type="GO" id="GO:0006351">
    <property type="term" value="P:DNA-templated transcription"/>
    <property type="evidence" value="ECO:0007669"/>
    <property type="project" value="UniProtKB-UniRule"/>
</dbReference>
<dbReference type="Gene3D" id="3.10.20.730">
    <property type="entry name" value="RNAP, epsilon subunit-like"/>
    <property type="match status" value="1"/>
</dbReference>
<dbReference type="HAMAP" id="MF_01553">
    <property type="entry name" value="RNApol_bact_RpoY"/>
    <property type="match status" value="1"/>
</dbReference>
<dbReference type="InterPro" id="IPR009907">
    <property type="entry name" value="RpoY"/>
</dbReference>
<dbReference type="NCBIfam" id="NF010188">
    <property type="entry name" value="PRK13667.1"/>
    <property type="match status" value="1"/>
</dbReference>
<dbReference type="Pfam" id="PF07288">
    <property type="entry name" value="RpoY"/>
    <property type="match status" value="1"/>
</dbReference>
<reference key="1">
    <citation type="journal article" date="2007" name="J. Bacteriol.">
        <title>Genome-wide transcriptional changes in Streptococcus gordonii in response to competence signaling peptide.</title>
        <authorList>
            <person name="Vickerman M.M."/>
            <person name="Iobst S."/>
            <person name="Jesionowski A.M."/>
            <person name="Gill S.R."/>
        </authorList>
    </citation>
    <scope>NUCLEOTIDE SEQUENCE [LARGE SCALE GENOMIC DNA]</scope>
    <source>
        <strain>Challis / ATCC 35105 / BCRC 15272 / CH1 / DL1 / V288</strain>
    </source>
</reference>
<gene>
    <name evidence="1" type="primary">rpoY</name>
    <name type="ordered locus">SGO_0220</name>
</gene>
<feature type="chain" id="PRO_1000087756" description="DNA-directed RNA polymerase subunit epsilon">
    <location>
        <begin position="1"/>
        <end position="76"/>
    </location>
</feature>
<name>RPOY_STRGC</name>
<evidence type="ECO:0000255" key="1">
    <source>
        <dbReference type="HAMAP-Rule" id="MF_01553"/>
    </source>
</evidence>
<accession>A8AUS9</accession>
<keyword id="KW-0240">DNA-directed RNA polymerase</keyword>
<keyword id="KW-0548">Nucleotidyltransferase</keyword>
<keyword id="KW-1185">Reference proteome</keyword>
<keyword id="KW-0804">Transcription</keyword>
<keyword id="KW-0808">Transferase</keyword>
<sequence>MIYKVFYQETKDRSPRRESTRSLYLEVEADNELEGRIKARKLVEENTDYNIEFIELLSDKHLEYEKESGTFQVTEF</sequence>